<keyword id="KW-0002">3D-structure</keyword>
<keyword id="KW-0009">Actin-binding</keyword>
<keyword id="KW-0963">Cytoplasm</keyword>
<keyword id="KW-0206">Cytoskeleton</keyword>
<keyword id="KW-0539">Nucleus</keyword>
<keyword id="KW-1185">Reference proteome</keyword>
<keyword id="KW-0677">Repeat</keyword>
<keyword id="KW-0853">WD repeat</keyword>
<accession>Q1JP79</accession>
<accession>A6QLF5</accession>
<reference key="1">
    <citation type="journal article" date="2005" name="BMC Genomics">
        <title>Characterization of 954 bovine full-CDS cDNA sequences.</title>
        <authorList>
            <person name="Harhay G.P."/>
            <person name="Sonstegard T.S."/>
            <person name="Keele J.W."/>
            <person name="Heaton M.P."/>
            <person name="Clawson M.L."/>
            <person name="Snelling W.M."/>
            <person name="Wiedmann R.T."/>
            <person name="Van Tassell C.P."/>
            <person name="Smith T.P.L."/>
        </authorList>
    </citation>
    <scope>NUCLEOTIDE SEQUENCE [LARGE SCALE MRNA]</scope>
</reference>
<reference key="2">
    <citation type="submission" date="2007-06" db="EMBL/GenBank/DDBJ databases">
        <authorList>
            <consortium name="NIH - Mammalian Gene Collection (MGC) project"/>
        </authorList>
    </citation>
    <scope>NUCLEOTIDE SEQUENCE [LARGE SCALE MRNA]</scope>
    <source>
        <strain>Hereford</strain>
        <tissue>Thymus</tissue>
    </source>
</reference>
<sequence>MSLHQFLLEPITCHAWNRDRTQIALSPNNHEVHIYKKNGGQWVKAHELKEHNGHITGIDWAPKSDRIVTCGADRNAYVWSQKDGVWKPTLVILRINRAATFVKWSPLENKFAVGSGARLISVCYFESENDWWVSKHIKKPIRSTVLSLDWHPNNVLLAAGSCDFKCRVFSAYIKEVDEKPASTPWGSKMPFGQLMSEFGGSGTGGWVHGVSFSASGSRLAWVSHDSTVSVADASKSVQVSTLKTEFLPLLSVSFVSENSVVAAGHDCCPMLFNYDDRGCLTFVSKLDIPKQSIQRNMSAMERFRNMDKRATTEDRNTALETLHQNSITQVSIYEVDKQDCRKFCTTGIDGAMTIWDFKTLESSIQGLRIM</sequence>
<dbReference type="EMBL" id="BT025475">
    <property type="protein sequence ID" value="ABF57431.1"/>
    <property type="molecule type" value="mRNA"/>
</dbReference>
<dbReference type="EMBL" id="BC147946">
    <property type="protein sequence ID" value="AAI47947.1"/>
    <property type="molecule type" value="mRNA"/>
</dbReference>
<dbReference type="RefSeq" id="NP_001068827.1">
    <property type="nucleotide sequence ID" value="NM_001075359.1"/>
</dbReference>
<dbReference type="RefSeq" id="XP_005225118.1">
    <property type="nucleotide sequence ID" value="XM_005225061.5"/>
</dbReference>
<dbReference type="PDB" id="7T5Q">
    <property type="method" value="EM"/>
    <property type="resolution" value="3.40 A"/>
    <property type="chains" value="C=1-370"/>
</dbReference>
<dbReference type="PDB" id="8TAH">
    <property type="method" value="EM"/>
    <property type="resolution" value="2.89 A"/>
    <property type="chains" value="C=1-370"/>
</dbReference>
<dbReference type="PDB" id="9DLX">
    <property type="method" value="EM"/>
    <property type="resolution" value="2.91 A"/>
    <property type="chains" value="C=1-370"/>
</dbReference>
<dbReference type="PDB" id="9DLZ">
    <property type="method" value="EM"/>
    <property type="resolution" value="3.40 A"/>
    <property type="chains" value="C=1-370"/>
</dbReference>
<dbReference type="PDBsum" id="7T5Q"/>
<dbReference type="PDBsum" id="8TAH"/>
<dbReference type="PDBsum" id="9DLX"/>
<dbReference type="PDBsum" id="9DLZ"/>
<dbReference type="EMDB" id="EMD-25707"/>
<dbReference type="EMDB" id="EMD-41135"/>
<dbReference type="EMDB" id="EMD-46992"/>
<dbReference type="EMDB" id="EMD-46993"/>
<dbReference type="SMR" id="Q1JP79"/>
<dbReference type="FunCoup" id="Q1JP79">
    <property type="interactions" value="4002"/>
</dbReference>
<dbReference type="STRING" id="9913.ENSBTAP00000072669"/>
<dbReference type="PaxDb" id="9913-ENSBTAP00000005555"/>
<dbReference type="Ensembl" id="ENSBTAT00000005555.7">
    <property type="protein sequence ID" value="ENSBTAP00000005555.5"/>
    <property type="gene ID" value="ENSBTAG00000004242.7"/>
</dbReference>
<dbReference type="GeneID" id="508402"/>
<dbReference type="KEGG" id="bta:508402"/>
<dbReference type="CTD" id="10552"/>
<dbReference type="VEuPathDB" id="HostDB:ENSBTAG00000004242"/>
<dbReference type="VGNC" id="VGNC:50215">
    <property type="gene designation" value="ARPC1A"/>
</dbReference>
<dbReference type="eggNOG" id="KOG1523">
    <property type="taxonomic scope" value="Eukaryota"/>
</dbReference>
<dbReference type="GeneTree" id="ENSGT00950000183183"/>
<dbReference type="HOGENOM" id="CLU_034396_1_0_1"/>
<dbReference type="InParanoid" id="Q1JP79"/>
<dbReference type="OMA" id="YVWEPSP"/>
<dbReference type="OrthoDB" id="406844at2759"/>
<dbReference type="TreeFam" id="TF315041"/>
<dbReference type="Reactome" id="R-BTA-2029482">
    <property type="pathway name" value="Regulation of actin dynamics for phagocytic cup formation"/>
</dbReference>
<dbReference type="Reactome" id="R-BTA-3928662">
    <property type="pathway name" value="EPHB-mediated forward signaling"/>
</dbReference>
<dbReference type="Reactome" id="R-BTA-5663213">
    <property type="pathway name" value="RHO GTPases Activate WASPs and WAVEs"/>
</dbReference>
<dbReference type="Reactome" id="R-BTA-8856828">
    <property type="pathway name" value="Clathrin-mediated endocytosis"/>
</dbReference>
<dbReference type="Proteomes" id="UP000009136">
    <property type="component" value="Chromosome 25"/>
</dbReference>
<dbReference type="Bgee" id="ENSBTAG00000004242">
    <property type="expression patterns" value="Expressed in surface of tongue and 105 other cell types or tissues"/>
</dbReference>
<dbReference type="GO" id="GO:0005885">
    <property type="term" value="C:Arp2/3 protein complex"/>
    <property type="evidence" value="ECO:0000250"/>
    <property type="project" value="UniProtKB"/>
</dbReference>
<dbReference type="GO" id="GO:0005737">
    <property type="term" value="C:cytoplasm"/>
    <property type="evidence" value="ECO:0007669"/>
    <property type="project" value="UniProtKB-KW"/>
</dbReference>
<dbReference type="GO" id="GO:0098978">
    <property type="term" value="C:glutamatergic synapse"/>
    <property type="evidence" value="ECO:0007669"/>
    <property type="project" value="Ensembl"/>
</dbReference>
<dbReference type="GO" id="GO:0036195">
    <property type="term" value="C:muscle cell projection membrane"/>
    <property type="evidence" value="ECO:0007669"/>
    <property type="project" value="Ensembl"/>
</dbReference>
<dbReference type="GO" id="GO:0005634">
    <property type="term" value="C:nucleus"/>
    <property type="evidence" value="ECO:0000250"/>
    <property type="project" value="UniProtKB"/>
</dbReference>
<dbReference type="GO" id="GO:0035861">
    <property type="term" value="C:site of double-strand break"/>
    <property type="evidence" value="ECO:0000250"/>
    <property type="project" value="UniProtKB"/>
</dbReference>
<dbReference type="GO" id="GO:0051015">
    <property type="term" value="F:actin filament binding"/>
    <property type="evidence" value="ECO:0000318"/>
    <property type="project" value="GO_Central"/>
</dbReference>
<dbReference type="GO" id="GO:0034314">
    <property type="term" value="P:Arp2/3 complex-mediated actin nucleation"/>
    <property type="evidence" value="ECO:0000318"/>
    <property type="project" value="GO_Central"/>
</dbReference>
<dbReference type="FunFam" id="2.130.10.10:FF:000030">
    <property type="entry name" value="Actin-related protein 2/3 complex subunit"/>
    <property type="match status" value="1"/>
</dbReference>
<dbReference type="Gene3D" id="2.130.10.10">
    <property type="entry name" value="YVTN repeat-like/Quinoprotein amine dehydrogenase"/>
    <property type="match status" value="1"/>
</dbReference>
<dbReference type="InterPro" id="IPR017383">
    <property type="entry name" value="ARPC1"/>
</dbReference>
<dbReference type="InterPro" id="IPR015943">
    <property type="entry name" value="WD40/YVTN_repeat-like_dom_sf"/>
</dbReference>
<dbReference type="InterPro" id="IPR036322">
    <property type="entry name" value="WD40_repeat_dom_sf"/>
</dbReference>
<dbReference type="InterPro" id="IPR001680">
    <property type="entry name" value="WD40_rpt"/>
</dbReference>
<dbReference type="PANTHER" id="PTHR10709">
    <property type="entry name" value="ACTIN-RELATED PROTEIN 2/3 COMPLEX SUBUNIT 1"/>
    <property type="match status" value="1"/>
</dbReference>
<dbReference type="PANTHER" id="PTHR10709:SF11">
    <property type="entry name" value="ACTIN-RELATED PROTEIN 2_3 COMPLEX SUBUNIT 1A"/>
    <property type="match status" value="1"/>
</dbReference>
<dbReference type="Pfam" id="PF00400">
    <property type="entry name" value="WD40"/>
    <property type="match status" value="2"/>
</dbReference>
<dbReference type="PIRSF" id="PIRSF038093">
    <property type="entry name" value="ARP2/3_su1"/>
    <property type="match status" value="1"/>
</dbReference>
<dbReference type="SMART" id="SM00320">
    <property type="entry name" value="WD40"/>
    <property type="match status" value="6"/>
</dbReference>
<dbReference type="SUPFAM" id="SSF50978">
    <property type="entry name" value="WD40 repeat-like"/>
    <property type="match status" value="1"/>
</dbReference>
<dbReference type="PROSITE" id="PS50082">
    <property type="entry name" value="WD_REPEATS_2"/>
    <property type="match status" value="1"/>
</dbReference>
<dbReference type="PROSITE" id="PS50294">
    <property type="entry name" value="WD_REPEATS_REGION"/>
    <property type="match status" value="1"/>
</dbReference>
<protein>
    <recommendedName>
        <fullName>Actin-related protein 2/3 complex subunit 1A</fullName>
    </recommendedName>
</protein>
<evidence type="ECO:0000250" key="1">
    <source>
        <dbReference type="UniProtKB" id="Q8AVT9"/>
    </source>
</evidence>
<evidence type="ECO:0000250" key="2">
    <source>
        <dbReference type="UniProtKB" id="Q92747"/>
    </source>
</evidence>
<evidence type="ECO:0000305" key="3"/>
<evidence type="ECO:0007829" key="4">
    <source>
        <dbReference type="PDB" id="7T5Q"/>
    </source>
</evidence>
<evidence type="ECO:0007829" key="5">
    <source>
        <dbReference type="PDB" id="8TAH"/>
    </source>
</evidence>
<name>ARC1A_BOVIN</name>
<gene>
    <name type="primary">ARPC1A</name>
</gene>
<organism>
    <name type="scientific">Bos taurus</name>
    <name type="common">Bovine</name>
    <dbReference type="NCBI Taxonomy" id="9913"/>
    <lineage>
        <taxon>Eukaryota</taxon>
        <taxon>Metazoa</taxon>
        <taxon>Chordata</taxon>
        <taxon>Craniata</taxon>
        <taxon>Vertebrata</taxon>
        <taxon>Euteleostomi</taxon>
        <taxon>Mammalia</taxon>
        <taxon>Eutheria</taxon>
        <taxon>Laurasiatheria</taxon>
        <taxon>Artiodactyla</taxon>
        <taxon>Ruminantia</taxon>
        <taxon>Pecora</taxon>
        <taxon>Bovidae</taxon>
        <taxon>Bovinae</taxon>
        <taxon>Bos</taxon>
    </lineage>
</organism>
<comment type="function">
    <text evidence="1 2">Probably functions as a component of the Arp2/3 complex which is involved in regulation of actin polymerization and together with an activating nucleation-promoting factor (NPF) mediates the formation of branched actin networks (By similarity). In addition to its role in the cytoplasmic cytoskeleton, the Arp2/3 complex also promotes actin polymerization in the nucleus, thereby regulating gene transcription and repair of damaged DNA (By similarity).</text>
</comment>
<comment type="subunit">
    <text evidence="2">Probable component of the Arp2/3 complex in which it may replace ARPC1B.</text>
</comment>
<comment type="subcellular location">
    <subcellularLocation>
        <location evidence="2">Cytoplasm</location>
        <location evidence="2">Cytoskeleton</location>
    </subcellularLocation>
    <subcellularLocation>
        <location evidence="1">Nucleus</location>
    </subcellularLocation>
</comment>
<comment type="similarity">
    <text evidence="3">Belongs to the WD repeat ARPC1 family.</text>
</comment>
<proteinExistence type="evidence at protein level"/>
<feature type="chain" id="PRO_0000254024" description="Actin-related protein 2/3 complex subunit 1A">
    <location>
        <begin position="1"/>
        <end position="370"/>
    </location>
</feature>
<feature type="repeat" description="WD 1">
    <location>
        <begin position="6"/>
        <end position="45"/>
    </location>
</feature>
<feature type="repeat" description="WD 2">
    <location>
        <begin position="50"/>
        <end position="89"/>
    </location>
</feature>
<feature type="repeat" description="WD 3">
    <location>
        <begin position="140"/>
        <end position="179"/>
    </location>
</feature>
<feature type="repeat" description="WD 4">
    <location>
        <begin position="202"/>
        <end position="241"/>
    </location>
</feature>
<feature type="repeat" description="WD 5">
    <location>
        <begin position="244"/>
        <end position="284"/>
    </location>
</feature>
<feature type="repeat" description="WD 6">
    <location>
        <begin position="322"/>
        <end position="365"/>
    </location>
</feature>
<feature type="strand" evidence="5">
    <location>
        <begin position="3"/>
        <end position="5"/>
    </location>
</feature>
<feature type="strand" evidence="5">
    <location>
        <begin position="14"/>
        <end position="16"/>
    </location>
</feature>
<feature type="strand" evidence="5">
    <location>
        <begin position="18"/>
        <end position="20"/>
    </location>
</feature>
<feature type="strand" evidence="5">
    <location>
        <begin position="22"/>
        <end position="25"/>
    </location>
</feature>
<feature type="strand" evidence="5">
    <location>
        <begin position="28"/>
        <end position="30"/>
    </location>
</feature>
<feature type="strand" evidence="5">
    <location>
        <begin position="32"/>
        <end position="37"/>
    </location>
</feature>
<feature type="strand" evidence="5">
    <location>
        <begin position="39"/>
        <end position="48"/>
    </location>
</feature>
<feature type="strand" evidence="5">
    <location>
        <begin position="55"/>
        <end position="61"/>
    </location>
</feature>
<feature type="turn" evidence="5">
    <location>
        <begin position="62"/>
        <end position="65"/>
    </location>
</feature>
<feature type="strand" evidence="5">
    <location>
        <begin position="66"/>
        <end position="71"/>
    </location>
</feature>
<feature type="strand" evidence="5">
    <location>
        <begin position="76"/>
        <end position="80"/>
    </location>
</feature>
<feature type="strand" evidence="5">
    <location>
        <begin position="82"/>
        <end position="85"/>
    </location>
</feature>
<feature type="strand" evidence="5">
    <location>
        <begin position="87"/>
        <end position="91"/>
    </location>
</feature>
<feature type="strand" evidence="5">
    <location>
        <begin position="99"/>
        <end position="104"/>
    </location>
</feature>
<feature type="strand" evidence="5">
    <location>
        <begin position="108"/>
        <end position="118"/>
    </location>
</feature>
<feature type="strand" evidence="5">
    <location>
        <begin position="120"/>
        <end position="126"/>
    </location>
</feature>
<feature type="turn" evidence="5">
    <location>
        <begin position="127"/>
        <end position="130"/>
    </location>
</feature>
<feature type="strand" evidence="5">
    <location>
        <begin position="131"/>
        <end position="137"/>
    </location>
</feature>
<feature type="strand" evidence="5">
    <location>
        <begin position="145"/>
        <end position="150"/>
    </location>
</feature>
<feature type="strand" evidence="5">
    <location>
        <begin position="154"/>
        <end position="161"/>
    </location>
</feature>
<feature type="strand" evidence="5">
    <location>
        <begin position="166"/>
        <end position="170"/>
    </location>
</feature>
<feature type="turn" evidence="5">
    <location>
        <begin position="174"/>
        <end position="176"/>
    </location>
</feature>
<feature type="strand" evidence="5">
    <location>
        <begin position="193"/>
        <end position="198"/>
    </location>
</feature>
<feature type="strand" evidence="5">
    <location>
        <begin position="201"/>
        <end position="203"/>
    </location>
</feature>
<feature type="strand" evidence="5">
    <location>
        <begin position="207"/>
        <end position="212"/>
    </location>
</feature>
<feature type="strand" evidence="5">
    <location>
        <begin position="214"/>
        <end position="223"/>
    </location>
</feature>
<feature type="strand" evidence="5">
    <location>
        <begin position="226"/>
        <end position="243"/>
    </location>
</feature>
<feature type="strand" evidence="5">
    <location>
        <begin position="245"/>
        <end position="247"/>
    </location>
</feature>
<feature type="strand" evidence="5">
    <location>
        <begin position="249"/>
        <end position="254"/>
    </location>
</feature>
<feature type="strand" evidence="5">
    <location>
        <begin position="256"/>
        <end position="264"/>
    </location>
</feature>
<feature type="strand" evidence="5">
    <location>
        <begin position="270"/>
        <end position="274"/>
    </location>
</feature>
<feature type="strand" evidence="5">
    <location>
        <begin position="280"/>
        <end position="286"/>
    </location>
</feature>
<feature type="strand" evidence="5">
    <location>
        <begin position="320"/>
        <end position="322"/>
    </location>
</feature>
<feature type="strand" evidence="5">
    <location>
        <begin position="327"/>
        <end position="332"/>
    </location>
</feature>
<feature type="helix" evidence="4">
    <location>
        <begin position="336"/>
        <end position="338"/>
    </location>
</feature>
<feature type="strand" evidence="5">
    <location>
        <begin position="342"/>
        <end position="347"/>
    </location>
</feature>
<feature type="strand" evidence="5">
    <location>
        <begin position="350"/>
        <end position="356"/>
    </location>
</feature>
<feature type="helix" evidence="5">
    <location>
        <begin position="357"/>
        <end position="363"/>
    </location>
</feature>